<proteinExistence type="inferred from homology"/>
<feature type="chain" id="PRO_0000248727" description="Proline--tRNA ligase">
    <location>
        <begin position="1"/>
        <end position="570"/>
    </location>
</feature>
<name>SYP_NEIMA</name>
<reference key="1">
    <citation type="journal article" date="2000" name="Nature">
        <title>Complete DNA sequence of a serogroup A strain of Neisseria meningitidis Z2491.</title>
        <authorList>
            <person name="Parkhill J."/>
            <person name="Achtman M."/>
            <person name="James K.D."/>
            <person name="Bentley S.D."/>
            <person name="Churcher C.M."/>
            <person name="Klee S.R."/>
            <person name="Morelli G."/>
            <person name="Basham D."/>
            <person name="Brown D."/>
            <person name="Chillingworth T."/>
            <person name="Davies R.M."/>
            <person name="Davis P."/>
            <person name="Devlin K."/>
            <person name="Feltwell T."/>
            <person name="Hamlin N."/>
            <person name="Holroyd S."/>
            <person name="Jagels K."/>
            <person name="Leather S."/>
            <person name="Moule S."/>
            <person name="Mungall K.L."/>
            <person name="Quail M.A."/>
            <person name="Rajandream M.A."/>
            <person name="Rutherford K.M."/>
            <person name="Simmonds M."/>
            <person name="Skelton J."/>
            <person name="Whitehead S."/>
            <person name="Spratt B.G."/>
            <person name="Barrell B.G."/>
        </authorList>
    </citation>
    <scope>NUCLEOTIDE SEQUENCE [LARGE SCALE GENOMIC DNA]</scope>
    <source>
        <strain>DSM 15465 / Z2491</strain>
    </source>
</reference>
<evidence type="ECO:0000255" key="1">
    <source>
        <dbReference type="HAMAP-Rule" id="MF_01569"/>
    </source>
</evidence>
<comment type="function">
    <text evidence="1">Catalyzes the attachment of proline to tRNA(Pro) in a two-step reaction: proline is first activated by ATP to form Pro-AMP and then transferred to the acceptor end of tRNA(Pro). As ProRS can inadvertently accommodate and process non-cognate amino acids such as alanine and cysteine, to avoid such errors it has two additional distinct editing activities against alanine. One activity is designated as 'pretransfer' editing and involves the tRNA(Pro)-independent hydrolysis of activated Ala-AMP. The other activity is designated 'posttransfer' editing and involves deacylation of mischarged Ala-tRNA(Pro). The misacylated Cys-tRNA(Pro) is not edited by ProRS.</text>
</comment>
<comment type="catalytic activity">
    <reaction evidence="1">
        <text>tRNA(Pro) + L-proline + ATP = L-prolyl-tRNA(Pro) + AMP + diphosphate</text>
        <dbReference type="Rhea" id="RHEA:14305"/>
        <dbReference type="Rhea" id="RHEA-COMP:9700"/>
        <dbReference type="Rhea" id="RHEA-COMP:9702"/>
        <dbReference type="ChEBI" id="CHEBI:30616"/>
        <dbReference type="ChEBI" id="CHEBI:33019"/>
        <dbReference type="ChEBI" id="CHEBI:60039"/>
        <dbReference type="ChEBI" id="CHEBI:78442"/>
        <dbReference type="ChEBI" id="CHEBI:78532"/>
        <dbReference type="ChEBI" id="CHEBI:456215"/>
        <dbReference type="EC" id="6.1.1.15"/>
    </reaction>
</comment>
<comment type="subunit">
    <text evidence="1">Homodimer.</text>
</comment>
<comment type="subcellular location">
    <subcellularLocation>
        <location evidence="1">Cytoplasm</location>
    </subcellularLocation>
</comment>
<comment type="domain">
    <text evidence="1">Consists of three domains: the N-terminal catalytic domain, the editing domain and the C-terminal anticodon-binding domain.</text>
</comment>
<comment type="similarity">
    <text evidence="1">Belongs to the class-II aminoacyl-tRNA synthetase family. ProS type 1 subfamily.</text>
</comment>
<keyword id="KW-0030">Aminoacyl-tRNA synthetase</keyword>
<keyword id="KW-0067">ATP-binding</keyword>
<keyword id="KW-0963">Cytoplasm</keyword>
<keyword id="KW-0436">Ligase</keyword>
<keyword id="KW-0547">Nucleotide-binding</keyword>
<keyword id="KW-0648">Protein biosynthesis</keyword>
<dbReference type="EC" id="6.1.1.15" evidence="1"/>
<dbReference type="EMBL" id="AL157959">
    <property type="protein sequence ID" value="CAM08698.1"/>
    <property type="molecule type" value="Genomic_DNA"/>
</dbReference>
<dbReference type="PIR" id="D81847">
    <property type="entry name" value="D81847"/>
</dbReference>
<dbReference type="RefSeq" id="WP_002237070.1">
    <property type="nucleotide sequence ID" value="NC_003116.1"/>
</dbReference>
<dbReference type="SMR" id="Q9JU09"/>
<dbReference type="EnsemblBacteria" id="CAM08698">
    <property type="protein sequence ID" value="CAM08698"/>
    <property type="gene ID" value="NMA1553"/>
</dbReference>
<dbReference type="KEGG" id="nma:NMA1553"/>
<dbReference type="HOGENOM" id="CLU_016739_0_0_4"/>
<dbReference type="Proteomes" id="UP000000626">
    <property type="component" value="Chromosome"/>
</dbReference>
<dbReference type="GO" id="GO:0005829">
    <property type="term" value="C:cytosol"/>
    <property type="evidence" value="ECO:0007669"/>
    <property type="project" value="TreeGrafter"/>
</dbReference>
<dbReference type="GO" id="GO:0002161">
    <property type="term" value="F:aminoacyl-tRNA deacylase activity"/>
    <property type="evidence" value="ECO:0007669"/>
    <property type="project" value="InterPro"/>
</dbReference>
<dbReference type="GO" id="GO:0005524">
    <property type="term" value="F:ATP binding"/>
    <property type="evidence" value="ECO:0007669"/>
    <property type="project" value="UniProtKB-UniRule"/>
</dbReference>
<dbReference type="GO" id="GO:0004827">
    <property type="term" value="F:proline-tRNA ligase activity"/>
    <property type="evidence" value="ECO:0007669"/>
    <property type="project" value="UniProtKB-UniRule"/>
</dbReference>
<dbReference type="GO" id="GO:0006433">
    <property type="term" value="P:prolyl-tRNA aminoacylation"/>
    <property type="evidence" value="ECO:0007669"/>
    <property type="project" value="UniProtKB-UniRule"/>
</dbReference>
<dbReference type="CDD" id="cd04334">
    <property type="entry name" value="ProRS-INS"/>
    <property type="match status" value="1"/>
</dbReference>
<dbReference type="CDD" id="cd00861">
    <property type="entry name" value="ProRS_anticodon_short"/>
    <property type="match status" value="1"/>
</dbReference>
<dbReference type="CDD" id="cd00779">
    <property type="entry name" value="ProRS_core_prok"/>
    <property type="match status" value="1"/>
</dbReference>
<dbReference type="FunFam" id="3.30.930.10:FF:000043">
    <property type="entry name" value="Proline--tRNA ligase"/>
    <property type="match status" value="1"/>
</dbReference>
<dbReference type="FunFam" id="3.30.930.10:FF:000097">
    <property type="entry name" value="Proline--tRNA ligase"/>
    <property type="match status" value="1"/>
</dbReference>
<dbReference type="Gene3D" id="3.40.50.800">
    <property type="entry name" value="Anticodon-binding domain"/>
    <property type="match status" value="1"/>
</dbReference>
<dbReference type="Gene3D" id="3.30.930.10">
    <property type="entry name" value="Bira Bifunctional Protein, Domain 2"/>
    <property type="match status" value="2"/>
</dbReference>
<dbReference type="HAMAP" id="MF_01569">
    <property type="entry name" value="Pro_tRNA_synth_type1"/>
    <property type="match status" value="1"/>
</dbReference>
<dbReference type="InterPro" id="IPR002314">
    <property type="entry name" value="aa-tRNA-synt_IIb"/>
</dbReference>
<dbReference type="InterPro" id="IPR006195">
    <property type="entry name" value="aa-tRNA-synth_II"/>
</dbReference>
<dbReference type="InterPro" id="IPR045864">
    <property type="entry name" value="aa-tRNA-synth_II/BPL/LPL"/>
</dbReference>
<dbReference type="InterPro" id="IPR004154">
    <property type="entry name" value="Anticodon-bd"/>
</dbReference>
<dbReference type="InterPro" id="IPR036621">
    <property type="entry name" value="Anticodon-bd_dom_sf"/>
</dbReference>
<dbReference type="InterPro" id="IPR002316">
    <property type="entry name" value="Pro-tRNA-ligase_IIa"/>
</dbReference>
<dbReference type="InterPro" id="IPR004500">
    <property type="entry name" value="Pro-tRNA-synth_IIa_bac-type"/>
</dbReference>
<dbReference type="InterPro" id="IPR023717">
    <property type="entry name" value="Pro-tRNA-Synthase_IIa_type1"/>
</dbReference>
<dbReference type="InterPro" id="IPR050062">
    <property type="entry name" value="Pro-tRNA_synthetase"/>
</dbReference>
<dbReference type="InterPro" id="IPR044140">
    <property type="entry name" value="ProRS_anticodon_short"/>
</dbReference>
<dbReference type="InterPro" id="IPR033730">
    <property type="entry name" value="ProRS_core_prok"/>
</dbReference>
<dbReference type="InterPro" id="IPR036754">
    <property type="entry name" value="YbaK/aa-tRNA-synt-asso_dom_sf"/>
</dbReference>
<dbReference type="InterPro" id="IPR007214">
    <property type="entry name" value="YbaK/aa-tRNA-synth-assoc-dom"/>
</dbReference>
<dbReference type="NCBIfam" id="NF006625">
    <property type="entry name" value="PRK09194.1"/>
    <property type="match status" value="1"/>
</dbReference>
<dbReference type="NCBIfam" id="TIGR00409">
    <property type="entry name" value="proS_fam_II"/>
    <property type="match status" value="1"/>
</dbReference>
<dbReference type="PANTHER" id="PTHR42753">
    <property type="entry name" value="MITOCHONDRIAL RIBOSOME PROTEIN L39/PROLYL-TRNA LIGASE FAMILY MEMBER"/>
    <property type="match status" value="1"/>
</dbReference>
<dbReference type="PANTHER" id="PTHR42753:SF2">
    <property type="entry name" value="PROLINE--TRNA LIGASE"/>
    <property type="match status" value="1"/>
</dbReference>
<dbReference type="Pfam" id="PF03129">
    <property type="entry name" value="HGTP_anticodon"/>
    <property type="match status" value="1"/>
</dbReference>
<dbReference type="Pfam" id="PF00587">
    <property type="entry name" value="tRNA-synt_2b"/>
    <property type="match status" value="1"/>
</dbReference>
<dbReference type="Pfam" id="PF04073">
    <property type="entry name" value="tRNA_edit"/>
    <property type="match status" value="1"/>
</dbReference>
<dbReference type="PIRSF" id="PIRSF001535">
    <property type="entry name" value="ProRS_1"/>
    <property type="match status" value="1"/>
</dbReference>
<dbReference type="PRINTS" id="PR01046">
    <property type="entry name" value="TRNASYNTHPRO"/>
</dbReference>
<dbReference type="SUPFAM" id="SSF52954">
    <property type="entry name" value="Class II aaRS ABD-related"/>
    <property type="match status" value="1"/>
</dbReference>
<dbReference type="SUPFAM" id="SSF55681">
    <property type="entry name" value="Class II aaRS and biotin synthetases"/>
    <property type="match status" value="1"/>
</dbReference>
<dbReference type="SUPFAM" id="SSF55826">
    <property type="entry name" value="YbaK/ProRS associated domain"/>
    <property type="match status" value="1"/>
</dbReference>
<dbReference type="PROSITE" id="PS50862">
    <property type="entry name" value="AA_TRNA_LIGASE_II"/>
    <property type="match status" value="1"/>
</dbReference>
<protein>
    <recommendedName>
        <fullName evidence="1">Proline--tRNA ligase</fullName>
        <ecNumber evidence="1">6.1.1.15</ecNumber>
    </recommendedName>
    <alternativeName>
        <fullName evidence="1">Prolyl-tRNA synthetase</fullName>
        <shortName evidence="1">ProRS</shortName>
    </alternativeName>
</protein>
<sequence>MKASQFFISTLKEAPAEAALASHKLMIRAGLIKANASGLYTWMPMGLRVLRKVENVVREEMARAGSVELLMPVVQPAELWQESGRWEFYGKELLRLKDRHDRDFCMGPTCEEVIADIVRKEINSYKQLPKNFYHIQTKFRDEVRPRFGVMRAREFVMKDAYSFHADYASLQTTYDAMYDAYCRIFTRLGLEFRPVAADTGSIGGTGSHEFQVLAESGEDVIAYSDTSDYAANVELAPTLPLKGERTAAQAELVKVHTPNVKTIESLVEFLNIPVEQTLKSIVVEGENEGEIVLLLLRGDHEFNDIKAEKLAGVKSPLTMASPAAIVEQFGANGGSLGPVGFAGKVYADFATEKGADWVIGANEDGYHYTGFNFGRDAAEPEFVDLRNVVEGDESPDGQGRLKLARGIEVGHVFQLRDKYTQAMNVSFLDNNGKSQIMEMGCYGIGITRVVAAAIEQNNDEKGIIWTKAMASFEVVIVPMNYKKSDTVREAADKIYAELLAAGADVLLDDRDERAGVLLNDSELLGIPHRIVIGDRALKEGNVEYAERRDNEAQAIAIGEIVARVTASLNA</sequence>
<organism>
    <name type="scientific">Neisseria meningitidis serogroup A / serotype 4A (strain DSM 15465 / Z2491)</name>
    <dbReference type="NCBI Taxonomy" id="122587"/>
    <lineage>
        <taxon>Bacteria</taxon>
        <taxon>Pseudomonadati</taxon>
        <taxon>Pseudomonadota</taxon>
        <taxon>Betaproteobacteria</taxon>
        <taxon>Neisseriales</taxon>
        <taxon>Neisseriaceae</taxon>
        <taxon>Neisseria</taxon>
    </lineage>
</organism>
<accession>Q9JU09</accession>
<accession>A1ISE2</accession>
<gene>
    <name evidence="1" type="primary">proS</name>
    <name type="ordered locus">NMA1553</name>
</gene>